<protein>
    <recommendedName>
        <fullName evidence="1">Glutamyl-tRNA reductase</fullName>
        <shortName evidence="1">GluTR</shortName>
        <ecNumber evidence="1">1.2.1.70</ecNumber>
    </recommendedName>
</protein>
<name>HEM1_DESAL</name>
<gene>
    <name evidence="1" type="primary">hemA</name>
    <name type="ordered locus">Dalk_3439</name>
</gene>
<accession>B8FLI1</accession>
<dbReference type="EC" id="1.2.1.70" evidence="1"/>
<dbReference type="EMBL" id="CP001322">
    <property type="protein sequence ID" value="ACL05127.1"/>
    <property type="molecule type" value="Genomic_DNA"/>
</dbReference>
<dbReference type="RefSeq" id="WP_015948184.1">
    <property type="nucleotide sequence ID" value="NC_011768.1"/>
</dbReference>
<dbReference type="SMR" id="B8FLI1"/>
<dbReference type="KEGG" id="dal:Dalk_3439"/>
<dbReference type="eggNOG" id="COG0373">
    <property type="taxonomic scope" value="Bacteria"/>
</dbReference>
<dbReference type="HOGENOM" id="CLU_035113_2_2_7"/>
<dbReference type="UniPathway" id="UPA00251">
    <property type="reaction ID" value="UER00316"/>
</dbReference>
<dbReference type="Proteomes" id="UP000000739">
    <property type="component" value="Chromosome"/>
</dbReference>
<dbReference type="GO" id="GO:0008883">
    <property type="term" value="F:glutamyl-tRNA reductase activity"/>
    <property type="evidence" value="ECO:0007669"/>
    <property type="project" value="UniProtKB-UniRule"/>
</dbReference>
<dbReference type="GO" id="GO:0050661">
    <property type="term" value="F:NADP binding"/>
    <property type="evidence" value="ECO:0007669"/>
    <property type="project" value="InterPro"/>
</dbReference>
<dbReference type="GO" id="GO:0019353">
    <property type="term" value="P:protoporphyrinogen IX biosynthetic process from glutamate"/>
    <property type="evidence" value="ECO:0007669"/>
    <property type="project" value="TreeGrafter"/>
</dbReference>
<dbReference type="CDD" id="cd05213">
    <property type="entry name" value="NAD_bind_Glutamyl_tRNA_reduct"/>
    <property type="match status" value="1"/>
</dbReference>
<dbReference type="FunFam" id="3.30.460.30:FF:000001">
    <property type="entry name" value="Glutamyl-tRNA reductase"/>
    <property type="match status" value="1"/>
</dbReference>
<dbReference type="FunFam" id="3.40.50.720:FF:000031">
    <property type="entry name" value="Glutamyl-tRNA reductase"/>
    <property type="match status" value="1"/>
</dbReference>
<dbReference type="Gene3D" id="3.30.460.30">
    <property type="entry name" value="Glutamyl-tRNA reductase, N-terminal domain"/>
    <property type="match status" value="1"/>
</dbReference>
<dbReference type="Gene3D" id="3.40.50.720">
    <property type="entry name" value="NAD(P)-binding Rossmann-like Domain"/>
    <property type="match status" value="1"/>
</dbReference>
<dbReference type="HAMAP" id="MF_00087">
    <property type="entry name" value="Glu_tRNA_reductase"/>
    <property type="match status" value="1"/>
</dbReference>
<dbReference type="InterPro" id="IPR000343">
    <property type="entry name" value="4pyrrol_synth_GluRdtase"/>
</dbReference>
<dbReference type="InterPro" id="IPR015896">
    <property type="entry name" value="4pyrrol_synth_GluRdtase_dimer"/>
</dbReference>
<dbReference type="InterPro" id="IPR015895">
    <property type="entry name" value="4pyrrol_synth_GluRdtase_N"/>
</dbReference>
<dbReference type="InterPro" id="IPR018214">
    <property type="entry name" value="GluRdtase_CS"/>
</dbReference>
<dbReference type="InterPro" id="IPR036453">
    <property type="entry name" value="GluRdtase_dimer_dom_sf"/>
</dbReference>
<dbReference type="InterPro" id="IPR036343">
    <property type="entry name" value="GluRdtase_N_sf"/>
</dbReference>
<dbReference type="InterPro" id="IPR036291">
    <property type="entry name" value="NAD(P)-bd_dom_sf"/>
</dbReference>
<dbReference type="InterPro" id="IPR006151">
    <property type="entry name" value="Shikm_DH/Glu-tRNA_Rdtase"/>
</dbReference>
<dbReference type="NCBIfam" id="TIGR01035">
    <property type="entry name" value="hemA"/>
    <property type="match status" value="1"/>
</dbReference>
<dbReference type="PANTHER" id="PTHR43013">
    <property type="entry name" value="GLUTAMYL-TRNA REDUCTASE"/>
    <property type="match status" value="1"/>
</dbReference>
<dbReference type="PANTHER" id="PTHR43013:SF1">
    <property type="entry name" value="GLUTAMYL-TRNA REDUCTASE"/>
    <property type="match status" value="1"/>
</dbReference>
<dbReference type="Pfam" id="PF00745">
    <property type="entry name" value="GlutR_dimer"/>
    <property type="match status" value="1"/>
</dbReference>
<dbReference type="Pfam" id="PF05201">
    <property type="entry name" value="GlutR_N"/>
    <property type="match status" value="1"/>
</dbReference>
<dbReference type="Pfam" id="PF01488">
    <property type="entry name" value="Shikimate_DH"/>
    <property type="match status" value="1"/>
</dbReference>
<dbReference type="PIRSF" id="PIRSF000445">
    <property type="entry name" value="4pyrrol_synth_GluRdtase"/>
    <property type="match status" value="1"/>
</dbReference>
<dbReference type="SUPFAM" id="SSF69742">
    <property type="entry name" value="Glutamyl tRNA-reductase catalytic, N-terminal domain"/>
    <property type="match status" value="1"/>
</dbReference>
<dbReference type="SUPFAM" id="SSF69075">
    <property type="entry name" value="Glutamyl tRNA-reductase dimerization domain"/>
    <property type="match status" value="1"/>
</dbReference>
<dbReference type="SUPFAM" id="SSF51735">
    <property type="entry name" value="NAD(P)-binding Rossmann-fold domains"/>
    <property type="match status" value="1"/>
</dbReference>
<dbReference type="PROSITE" id="PS00747">
    <property type="entry name" value="GLUTR"/>
    <property type="match status" value="1"/>
</dbReference>
<sequence>MDIVLVGLNHKTAPVDIRECFAFDSLEADAGLKELSRIPELTEAVLISTCNRVEIAAACQDPDEGIAAIKDFFSRTKSMPLENFEQNLFVYKGDEAVQHVFRVASSLDSMVLGEPQILGQMKESYRLATQAKTTGAVLNRLMHRCFMTAKRVRKETGIGDHAVSISYAAVELARKIFGELTDKKVLLIGAGEMAELAVEHLLNHRAAGVFVANRTFERAVALAERFRGTPIRLEEVEEHLKIADIIISSTGAPGYVLEKKDVKKVLRARKNRPLFFIDIAVPRDIDPAINNLSNNFVYDIDDLQGVIDRNIDERQKEAVRAERIVDENVIKYRTWLEGLDIVPTIVSLQKKLEAIRQAEMAKSLANIPEIDEKGREAIERLTQSIINKVMHDPIQFLKAGGHREKQKKEVLGFTRDIFNLNNPQNGDEFTPDEE</sequence>
<evidence type="ECO:0000255" key="1">
    <source>
        <dbReference type="HAMAP-Rule" id="MF_00087"/>
    </source>
</evidence>
<comment type="function">
    <text evidence="1">Catalyzes the NADPH-dependent reduction of glutamyl-tRNA(Glu) to glutamate 1-semialdehyde (GSA).</text>
</comment>
<comment type="catalytic activity">
    <reaction evidence="1">
        <text>(S)-4-amino-5-oxopentanoate + tRNA(Glu) + NADP(+) = L-glutamyl-tRNA(Glu) + NADPH + H(+)</text>
        <dbReference type="Rhea" id="RHEA:12344"/>
        <dbReference type="Rhea" id="RHEA-COMP:9663"/>
        <dbReference type="Rhea" id="RHEA-COMP:9680"/>
        <dbReference type="ChEBI" id="CHEBI:15378"/>
        <dbReference type="ChEBI" id="CHEBI:57501"/>
        <dbReference type="ChEBI" id="CHEBI:57783"/>
        <dbReference type="ChEBI" id="CHEBI:58349"/>
        <dbReference type="ChEBI" id="CHEBI:78442"/>
        <dbReference type="ChEBI" id="CHEBI:78520"/>
        <dbReference type="EC" id="1.2.1.70"/>
    </reaction>
</comment>
<comment type="pathway">
    <text evidence="1">Porphyrin-containing compound metabolism; protoporphyrin-IX biosynthesis; 5-aminolevulinate from L-glutamyl-tRNA(Glu): step 1/2.</text>
</comment>
<comment type="subunit">
    <text evidence="1">Homodimer.</text>
</comment>
<comment type="domain">
    <text evidence="1">Possesses an unusual extended V-shaped dimeric structure with each monomer consisting of three distinct domains arranged along a curved 'spinal' alpha-helix. The N-terminal catalytic domain specifically recognizes the glutamate moiety of the substrate. The second domain is the NADPH-binding domain, and the third C-terminal domain is responsible for dimerization.</text>
</comment>
<comment type="miscellaneous">
    <text evidence="1">During catalysis, the active site Cys acts as a nucleophile attacking the alpha-carbonyl group of tRNA-bound glutamate with the formation of a thioester intermediate between enzyme and glutamate, and the concomitant release of tRNA(Glu). The thioester intermediate is finally reduced by direct hydride transfer from NADPH, to form the product GSA.</text>
</comment>
<comment type="similarity">
    <text evidence="1">Belongs to the glutamyl-tRNA reductase family.</text>
</comment>
<feature type="chain" id="PRO_1000190518" description="Glutamyl-tRNA reductase">
    <location>
        <begin position="1"/>
        <end position="434"/>
    </location>
</feature>
<feature type="active site" description="Nucleophile" evidence="1">
    <location>
        <position position="50"/>
    </location>
</feature>
<feature type="binding site" evidence="1">
    <location>
        <begin position="49"/>
        <end position="52"/>
    </location>
    <ligand>
        <name>substrate</name>
    </ligand>
</feature>
<feature type="binding site" evidence="1">
    <location>
        <position position="109"/>
    </location>
    <ligand>
        <name>substrate</name>
    </ligand>
</feature>
<feature type="binding site" evidence="1">
    <location>
        <begin position="114"/>
        <end position="116"/>
    </location>
    <ligand>
        <name>substrate</name>
    </ligand>
</feature>
<feature type="binding site" evidence="1">
    <location>
        <position position="120"/>
    </location>
    <ligand>
        <name>substrate</name>
    </ligand>
</feature>
<feature type="binding site" evidence="1">
    <location>
        <begin position="189"/>
        <end position="194"/>
    </location>
    <ligand>
        <name>NADP(+)</name>
        <dbReference type="ChEBI" id="CHEBI:58349"/>
    </ligand>
</feature>
<feature type="site" description="Important for activity" evidence="1">
    <location>
        <position position="99"/>
    </location>
</feature>
<proteinExistence type="inferred from homology"/>
<reference key="1">
    <citation type="journal article" date="2012" name="Environ. Microbiol.">
        <title>The genome sequence of Desulfatibacillum alkenivorans AK-01: a blueprint for anaerobic alkane oxidation.</title>
        <authorList>
            <person name="Callaghan A.V."/>
            <person name="Morris B.E."/>
            <person name="Pereira I.A."/>
            <person name="McInerney M.J."/>
            <person name="Austin R.N."/>
            <person name="Groves J.T."/>
            <person name="Kukor J.J."/>
            <person name="Suflita J.M."/>
            <person name="Young L.Y."/>
            <person name="Zylstra G.J."/>
            <person name="Wawrik B."/>
        </authorList>
    </citation>
    <scope>NUCLEOTIDE SEQUENCE [LARGE SCALE GENOMIC DNA]</scope>
    <source>
        <strain>AK-01</strain>
    </source>
</reference>
<organism>
    <name type="scientific">Desulfatibacillum aliphaticivorans</name>
    <dbReference type="NCBI Taxonomy" id="218208"/>
    <lineage>
        <taxon>Bacteria</taxon>
        <taxon>Pseudomonadati</taxon>
        <taxon>Thermodesulfobacteriota</taxon>
        <taxon>Desulfobacteria</taxon>
        <taxon>Desulfobacterales</taxon>
        <taxon>Desulfatibacillaceae</taxon>
        <taxon>Desulfatibacillum</taxon>
    </lineage>
</organism>
<keyword id="KW-0521">NADP</keyword>
<keyword id="KW-0560">Oxidoreductase</keyword>
<keyword id="KW-0627">Porphyrin biosynthesis</keyword>
<keyword id="KW-1185">Reference proteome</keyword>